<feature type="chain" id="PRO_1000071243" description="S-adenosylmethionine synthase">
    <location>
        <begin position="1"/>
        <end position="397"/>
    </location>
</feature>
<feature type="region of interest" description="Flexible loop" evidence="1">
    <location>
        <begin position="101"/>
        <end position="111"/>
    </location>
</feature>
<feature type="binding site" description="in other chain" evidence="1">
    <location>
        <position position="17"/>
    </location>
    <ligand>
        <name>ATP</name>
        <dbReference type="ChEBI" id="CHEBI:30616"/>
        <note>ligand shared between two neighboring subunits</note>
    </ligand>
</feature>
<feature type="binding site" evidence="1">
    <location>
        <position position="19"/>
    </location>
    <ligand>
        <name>Mg(2+)</name>
        <dbReference type="ChEBI" id="CHEBI:18420"/>
    </ligand>
</feature>
<feature type="binding site" evidence="1">
    <location>
        <position position="45"/>
    </location>
    <ligand>
        <name>K(+)</name>
        <dbReference type="ChEBI" id="CHEBI:29103"/>
    </ligand>
</feature>
<feature type="binding site" description="in other chain" evidence="1">
    <location>
        <position position="58"/>
    </location>
    <ligand>
        <name>L-methionine</name>
        <dbReference type="ChEBI" id="CHEBI:57844"/>
        <note>ligand shared between two neighboring subunits</note>
    </ligand>
</feature>
<feature type="binding site" description="in other chain" evidence="1">
    <location>
        <position position="101"/>
    </location>
    <ligand>
        <name>L-methionine</name>
        <dbReference type="ChEBI" id="CHEBI:57844"/>
        <note>ligand shared between two neighboring subunits</note>
    </ligand>
</feature>
<feature type="binding site" description="in other chain" evidence="1">
    <location>
        <begin position="176"/>
        <end position="178"/>
    </location>
    <ligand>
        <name>ATP</name>
        <dbReference type="ChEBI" id="CHEBI:30616"/>
        <note>ligand shared between two neighboring subunits</note>
    </ligand>
</feature>
<feature type="binding site" description="in other chain" evidence="1">
    <location>
        <begin position="243"/>
        <end position="244"/>
    </location>
    <ligand>
        <name>ATP</name>
        <dbReference type="ChEBI" id="CHEBI:30616"/>
        <note>ligand shared between two neighboring subunits</note>
    </ligand>
</feature>
<feature type="binding site" evidence="1">
    <location>
        <position position="252"/>
    </location>
    <ligand>
        <name>ATP</name>
        <dbReference type="ChEBI" id="CHEBI:30616"/>
        <note>ligand shared between two neighboring subunits</note>
    </ligand>
</feature>
<feature type="binding site" evidence="1">
    <location>
        <position position="252"/>
    </location>
    <ligand>
        <name>L-methionine</name>
        <dbReference type="ChEBI" id="CHEBI:57844"/>
        <note>ligand shared between two neighboring subunits</note>
    </ligand>
</feature>
<feature type="binding site" description="in other chain" evidence="1">
    <location>
        <begin position="258"/>
        <end position="259"/>
    </location>
    <ligand>
        <name>ATP</name>
        <dbReference type="ChEBI" id="CHEBI:30616"/>
        <note>ligand shared between two neighboring subunits</note>
    </ligand>
</feature>
<feature type="binding site" evidence="1">
    <location>
        <position position="279"/>
    </location>
    <ligand>
        <name>ATP</name>
        <dbReference type="ChEBI" id="CHEBI:30616"/>
        <note>ligand shared between two neighboring subunits</note>
    </ligand>
</feature>
<feature type="binding site" description="in other chain" evidence="1">
    <location>
        <position position="283"/>
    </location>
    <ligand>
        <name>L-methionine</name>
        <dbReference type="ChEBI" id="CHEBI:57844"/>
        <note>ligand shared between two neighboring subunits</note>
    </ligand>
</feature>
<name>METK_STAAE</name>
<keyword id="KW-0067">ATP-binding</keyword>
<keyword id="KW-0963">Cytoplasm</keyword>
<keyword id="KW-0460">Magnesium</keyword>
<keyword id="KW-0479">Metal-binding</keyword>
<keyword id="KW-0547">Nucleotide-binding</keyword>
<keyword id="KW-0554">One-carbon metabolism</keyword>
<keyword id="KW-0630">Potassium</keyword>
<keyword id="KW-0808">Transferase</keyword>
<evidence type="ECO:0000255" key="1">
    <source>
        <dbReference type="HAMAP-Rule" id="MF_00086"/>
    </source>
</evidence>
<organism>
    <name type="scientific">Staphylococcus aureus (strain Newman)</name>
    <dbReference type="NCBI Taxonomy" id="426430"/>
    <lineage>
        <taxon>Bacteria</taxon>
        <taxon>Bacillati</taxon>
        <taxon>Bacillota</taxon>
        <taxon>Bacilli</taxon>
        <taxon>Bacillales</taxon>
        <taxon>Staphylococcaceae</taxon>
        <taxon>Staphylococcus</taxon>
    </lineage>
</organism>
<comment type="function">
    <text evidence="1">Catalyzes the formation of S-adenosylmethionine (AdoMet) from methionine and ATP. The overall synthetic reaction is composed of two sequential steps, AdoMet formation and the subsequent tripolyphosphate hydrolysis which occurs prior to release of AdoMet from the enzyme.</text>
</comment>
<comment type="catalytic activity">
    <reaction evidence="1">
        <text>L-methionine + ATP + H2O = S-adenosyl-L-methionine + phosphate + diphosphate</text>
        <dbReference type="Rhea" id="RHEA:21080"/>
        <dbReference type="ChEBI" id="CHEBI:15377"/>
        <dbReference type="ChEBI" id="CHEBI:30616"/>
        <dbReference type="ChEBI" id="CHEBI:33019"/>
        <dbReference type="ChEBI" id="CHEBI:43474"/>
        <dbReference type="ChEBI" id="CHEBI:57844"/>
        <dbReference type="ChEBI" id="CHEBI:59789"/>
        <dbReference type="EC" id="2.5.1.6"/>
    </reaction>
</comment>
<comment type="cofactor">
    <cofactor evidence="1">
        <name>Mg(2+)</name>
        <dbReference type="ChEBI" id="CHEBI:18420"/>
    </cofactor>
    <text evidence="1">Binds 2 divalent ions per subunit.</text>
</comment>
<comment type="cofactor">
    <cofactor evidence="1">
        <name>K(+)</name>
        <dbReference type="ChEBI" id="CHEBI:29103"/>
    </cofactor>
    <text evidence="1">Binds 1 potassium ion per subunit.</text>
</comment>
<comment type="pathway">
    <text evidence="1">Amino-acid biosynthesis; S-adenosyl-L-methionine biosynthesis; S-adenosyl-L-methionine from L-methionine: step 1/1.</text>
</comment>
<comment type="subunit">
    <text evidence="1">Homotetramer; dimer of dimers.</text>
</comment>
<comment type="subcellular location">
    <subcellularLocation>
        <location evidence="1">Cytoplasm</location>
    </subcellularLocation>
</comment>
<comment type="similarity">
    <text evidence="1">Belongs to the AdoMet synthase family.</text>
</comment>
<reference key="1">
    <citation type="journal article" date="2008" name="J. Bacteriol.">
        <title>Genome sequence of Staphylococcus aureus strain Newman and comparative analysis of staphylococcal genomes: polymorphism and evolution of two major pathogenicity islands.</title>
        <authorList>
            <person name="Baba T."/>
            <person name="Bae T."/>
            <person name="Schneewind O."/>
            <person name="Takeuchi F."/>
            <person name="Hiramatsu K."/>
        </authorList>
    </citation>
    <scope>NUCLEOTIDE SEQUENCE [LARGE SCALE GENOMIC DNA]</scope>
    <source>
        <strain>Newman</strain>
    </source>
</reference>
<protein>
    <recommendedName>
        <fullName evidence="1">S-adenosylmethionine synthase</fullName>
        <shortName evidence="1">AdoMet synthase</shortName>
        <ecNumber evidence="1">2.5.1.6</ecNumber>
    </recommendedName>
    <alternativeName>
        <fullName evidence="1">MAT</fullName>
    </alternativeName>
    <alternativeName>
        <fullName evidence="1">Methionine adenosyltransferase</fullName>
    </alternativeName>
</protein>
<gene>
    <name evidence="1" type="primary">metK</name>
    <name type="ordered locus">NWMN_1680</name>
</gene>
<dbReference type="EC" id="2.5.1.6" evidence="1"/>
<dbReference type="EMBL" id="AP009351">
    <property type="protein sequence ID" value="BAF67952.1"/>
    <property type="molecule type" value="Genomic_DNA"/>
</dbReference>
<dbReference type="RefSeq" id="WP_000933822.1">
    <property type="nucleotide sequence ID" value="NZ_JBBIAE010000017.1"/>
</dbReference>
<dbReference type="SMR" id="A6QHX0"/>
<dbReference type="KEGG" id="sae:NWMN_1680"/>
<dbReference type="HOGENOM" id="CLU_041802_1_1_9"/>
<dbReference type="UniPathway" id="UPA00315">
    <property type="reaction ID" value="UER00080"/>
</dbReference>
<dbReference type="Proteomes" id="UP000006386">
    <property type="component" value="Chromosome"/>
</dbReference>
<dbReference type="GO" id="GO:0005737">
    <property type="term" value="C:cytoplasm"/>
    <property type="evidence" value="ECO:0007669"/>
    <property type="project" value="UniProtKB-SubCell"/>
</dbReference>
<dbReference type="GO" id="GO:0005524">
    <property type="term" value="F:ATP binding"/>
    <property type="evidence" value="ECO:0007669"/>
    <property type="project" value="UniProtKB-UniRule"/>
</dbReference>
<dbReference type="GO" id="GO:0000287">
    <property type="term" value="F:magnesium ion binding"/>
    <property type="evidence" value="ECO:0007669"/>
    <property type="project" value="UniProtKB-UniRule"/>
</dbReference>
<dbReference type="GO" id="GO:0004478">
    <property type="term" value="F:methionine adenosyltransferase activity"/>
    <property type="evidence" value="ECO:0007669"/>
    <property type="project" value="UniProtKB-UniRule"/>
</dbReference>
<dbReference type="GO" id="GO:0006730">
    <property type="term" value="P:one-carbon metabolic process"/>
    <property type="evidence" value="ECO:0007669"/>
    <property type="project" value="UniProtKB-KW"/>
</dbReference>
<dbReference type="GO" id="GO:0006556">
    <property type="term" value="P:S-adenosylmethionine biosynthetic process"/>
    <property type="evidence" value="ECO:0007669"/>
    <property type="project" value="UniProtKB-UniRule"/>
</dbReference>
<dbReference type="CDD" id="cd18079">
    <property type="entry name" value="S-AdoMet_synt"/>
    <property type="match status" value="1"/>
</dbReference>
<dbReference type="FunFam" id="3.30.300.10:FF:000003">
    <property type="entry name" value="S-adenosylmethionine synthase"/>
    <property type="match status" value="1"/>
</dbReference>
<dbReference type="FunFam" id="3.30.300.10:FF:000004">
    <property type="entry name" value="S-adenosylmethionine synthase"/>
    <property type="match status" value="1"/>
</dbReference>
<dbReference type="Gene3D" id="3.30.300.10">
    <property type="match status" value="3"/>
</dbReference>
<dbReference type="HAMAP" id="MF_00086">
    <property type="entry name" value="S_AdoMet_synth1"/>
    <property type="match status" value="1"/>
</dbReference>
<dbReference type="InterPro" id="IPR022631">
    <property type="entry name" value="ADOMET_SYNTHASE_CS"/>
</dbReference>
<dbReference type="InterPro" id="IPR022630">
    <property type="entry name" value="S-AdoMet_synt_C"/>
</dbReference>
<dbReference type="InterPro" id="IPR022629">
    <property type="entry name" value="S-AdoMet_synt_central"/>
</dbReference>
<dbReference type="InterPro" id="IPR022628">
    <property type="entry name" value="S-AdoMet_synt_N"/>
</dbReference>
<dbReference type="InterPro" id="IPR002133">
    <property type="entry name" value="S-AdoMet_synthetase"/>
</dbReference>
<dbReference type="InterPro" id="IPR022636">
    <property type="entry name" value="S-AdoMet_synthetase_sfam"/>
</dbReference>
<dbReference type="NCBIfam" id="TIGR01034">
    <property type="entry name" value="metK"/>
    <property type="match status" value="1"/>
</dbReference>
<dbReference type="PANTHER" id="PTHR11964">
    <property type="entry name" value="S-ADENOSYLMETHIONINE SYNTHETASE"/>
    <property type="match status" value="1"/>
</dbReference>
<dbReference type="Pfam" id="PF02773">
    <property type="entry name" value="S-AdoMet_synt_C"/>
    <property type="match status" value="1"/>
</dbReference>
<dbReference type="Pfam" id="PF02772">
    <property type="entry name" value="S-AdoMet_synt_M"/>
    <property type="match status" value="1"/>
</dbReference>
<dbReference type="Pfam" id="PF00438">
    <property type="entry name" value="S-AdoMet_synt_N"/>
    <property type="match status" value="1"/>
</dbReference>
<dbReference type="PIRSF" id="PIRSF000497">
    <property type="entry name" value="MAT"/>
    <property type="match status" value="1"/>
</dbReference>
<dbReference type="SUPFAM" id="SSF55973">
    <property type="entry name" value="S-adenosylmethionine synthetase"/>
    <property type="match status" value="3"/>
</dbReference>
<dbReference type="PROSITE" id="PS00376">
    <property type="entry name" value="ADOMET_SYNTHASE_1"/>
    <property type="match status" value="1"/>
</dbReference>
<dbReference type="PROSITE" id="PS00377">
    <property type="entry name" value="ADOMET_SYNTHASE_2"/>
    <property type="match status" value="1"/>
</dbReference>
<sequence length="397" mass="43641">MLNNKRLFTSESVTEGHPDKIADQVSDAILDAILKDDPNARVACETTVTTGMALIAGEISTTTYVDIPKVVRETIKEIGYTRAKYGYDYETMAILTAIDEQSPDIAQGVDKALEYRDKDSEEEIEATGAGDQGLMFGYATNETETYMPLAIYLSHQLAKRLSDVRKDGTLNYLRPDGKVQVTVEYDENDNPVRIDTIVVSTQHAEDVTLEQIQEDIKAHVIYPTVPENLINEQTKFYINPTGRFVIGGPQGDAGLTGRKIIVDTYGGYARHGGGCFSGKDPTKVDRSAAYAARYVAKNIVAAGLADQCEVQLAYAIGVAEPVSIAIDTFGTGKVSEGQLVEAVRKHFDLRPAGIIKMLDLKQPIYKQTAAYGHFGRTDVLFPWEKLDKVEELKDAVK</sequence>
<accession>A6QHX0</accession>
<proteinExistence type="inferred from homology"/>